<accession>F1MQW7</accession>
<accession>Q2M2U6</accession>
<reference key="1">
    <citation type="journal article" date="2009" name="Genome Biol.">
        <title>A whole-genome assembly of the domestic cow, Bos taurus.</title>
        <authorList>
            <person name="Zimin A.V."/>
            <person name="Delcher A.L."/>
            <person name="Florea L."/>
            <person name="Kelley D.R."/>
            <person name="Schatz M.C."/>
            <person name="Puiu D."/>
            <person name="Hanrahan F."/>
            <person name="Pertea G."/>
            <person name="Van Tassell C.P."/>
            <person name="Sonstegard T.S."/>
            <person name="Marcais G."/>
            <person name="Roberts M."/>
            <person name="Subramanian P."/>
            <person name="Yorke J.A."/>
            <person name="Salzberg S.L."/>
        </authorList>
    </citation>
    <scope>NUCLEOTIDE SEQUENCE [LARGE SCALE GENOMIC DNA]</scope>
    <source>
        <strain>Hereford</strain>
    </source>
</reference>
<reference key="2">
    <citation type="submission" date="2006-01" db="EMBL/GenBank/DDBJ databases">
        <authorList>
            <consortium name="NIH - Mammalian Gene Collection (MGC) project"/>
        </authorList>
    </citation>
    <scope>NUCLEOTIDE SEQUENCE [LARGE SCALE MRNA]</scope>
</reference>
<name>CK097_BOVIN</name>
<evidence type="ECO:0000250" key="1">
    <source>
        <dbReference type="UniProtKB" id="Q9DAE7"/>
    </source>
</evidence>
<evidence type="ECO:0000256" key="2">
    <source>
        <dbReference type="SAM" id="MobiDB-lite"/>
    </source>
</evidence>
<evidence type="ECO:0000305" key="3"/>
<protein>
    <recommendedName>
        <fullName evidence="3">Uncharacterized protein C11orf97 homolog</fullName>
    </recommendedName>
</protein>
<organism>
    <name type="scientific">Bos taurus</name>
    <name type="common">Bovine</name>
    <dbReference type="NCBI Taxonomy" id="9913"/>
    <lineage>
        <taxon>Eukaryota</taxon>
        <taxon>Metazoa</taxon>
        <taxon>Chordata</taxon>
        <taxon>Craniata</taxon>
        <taxon>Vertebrata</taxon>
        <taxon>Euteleostomi</taxon>
        <taxon>Mammalia</taxon>
        <taxon>Eutheria</taxon>
        <taxon>Laurasiatheria</taxon>
        <taxon>Artiodactyla</taxon>
        <taxon>Ruminantia</taxon>
        <taxon>Pecora</taxon>
        <taxon>Bovidae</taxon>
        <taxon>Bovinae</taxon>
        <taxon>Bos</taxon>
    </lineage>
</organism>
<comment type="subcellular location">
    <subcellularLocation>
        <location evidence="1">Cytoplasm</location>
        <location evidence="1">Cytoskeleton</location>
        <location evidence="1">Cilium basal body</location>
    </subcellularLocation>
</comment>
<proteinExistence type="evidence at transcript level"/>
<feature type="chain" id="PRO_0000440042" description="Uncharacterized protein C11orf97 homolog">
    <location>
        <begin position="1"/>
        <end position="126"/>
    </location>
</feature>
<feature type="region of interest" description="Disordered" evidence="2">
    <location>
        <begin position="1"/>
        <end position="46"/>
    </location>
</feature>
<feature type="sequence conflict" description="In Ref. 2; AAI11607." evidence="3" ref="2">
    <original>L</original>
    <variation>I</variation>
    <location>
        <position position="53"/>
    </location>
</feature>
<keyword id="KW-0966">Cell projection</keyword>
<keyword id="KW-0963">Cytoplasm</keyword>
<keyword id="KW-0206">Cytoskeleton</keyword>
<keyword id="KW-1185">Reference proteome</keyword>
<sequence>MREEEAAAVVTVPQAGRDGEQPGPPAGLGCAAVRGEPGGGGPQESRKQWKKFLYCEPHKRIKEVLEEELYIKRDECHIKHPPAVALEGIWSIKRNLPVGGLKPGLQSRNSLLPQAKYYSRHGGLRR</sequence>
<dbReference type="EMBL" id="DAAA02040155">
    <property type="status" value="NOT_ANNOTATED_CDS"/>
    <property type="molecule type" value="Genomic_DNA"/>
</dbReference>
<dbReference type="EMBL" id="DAAA02040156">
    <property type="status" value="NOT_ANNOTATED_CDS"/>
    <property type="molecule type" value="Genomic_DNA"/>
</dbReference>
<dbReference type="EMBL" id="DAAA02040157">
    <property type="status" value="NOT_ANNOTATED_CDS"/>
    <property type="molecule type" value="Genomic_DNA"/>
</dbReference>
<dbReference type="EMBL" id="BC111606">
    <property type="protein sequence ID" value="AAI11607.1"/>
    <property type="molecule type" value="mRNA"/>
</dbReference>
<dbReference type="RefSeq" id="NP_001070544.1">
    <property type="nucleotide sequence ID" value="NM_001077076.2"/>
</dbReference>
<dbReference type="SMR" id="F1MQW7"/>
<dbReference type="FunCoup" id="F1MQW7">
    <property type="interactions" value="5"/>
</dbReference>
<dbReference type="PaxDb" id="9913-ENSBTAP00000048825"/>
<dbReference type="Ensembl" id="ENSBTAT00000055337.4">
    <property type="protein sequence ID" value="ENSBTAP00000048825.2"/>
    <property type="gene ID" value="ENSBTAG00000040449.4"/>
</dbReference>
<dbReference type="GeneID" id="768017"/>
<dbReference type="KEGG" id="bta:768017"/>
<dbReference type="CTD" id="768017"/>
<dbReference type="VEuPathDB" id="HostDB:ENSBTAG00000040449"/>
<dbReference type="VGNC" id="VGNC:52637">
    <property type="gene designation" value="C15H11orf97"/>
</dbReference>
<dbReference type="eggNOG" id="ENOG502SAWP">
    <property type="taxonomic scope" value="Eukaryota"/>
</dbReference>
<dbReference type="GeneTree" id="ENSGT00520000058823"/>
<dbReference type="HOGENOM" id="CLU_2009274_0_0_1"/>
<dbReference type="InParanoid" id="F1MQW7"/>
<dbReference type="OMA" id="HIKRDEC"/>
<dbReference type="OrthoDB" id="6154260at2759"/>
<dbReference type="Proteomes" id="UP000009136">
    <property type="component" value="Chromosome 15"/>
</dbReference>
<dbReference type="Bgee" id="ENSBTAG00000040449">
    <property type="expression patterns" value="Expressed in olfactory segment of nasal mucosa and 37 other cell types or tissues"/>
</dbReference>
<dbReference type="GO" id="GO:0036064">
    <property type="term" value="C:ciliary basal body"/>
    <property type="evidence" value="ECO:0000250"/>
    <property type="project" value="UniProtKB"/>
</dbReference>
<dbReference type="GO" id="GO:0097546">
    <property type="term" value="C:ciliary base"/>
    <property type="evidence" value="ECO:0000318"/>
    <property type="project" value="GO_Central"/>
</dbReference>
<dbReference type="GO" id="GO:0005737">
    <property type="term" value="C:cytoplasm"/>
    <property type="evidence" value="ECO:0007669"/>
    <property type="project" value="UniProtKB-KW"/>
</dbReference>
<dbReference type="InterPro" id="IPR040429">
    <property type="entry name" value="C11orf97-like"/>
</dbReference>
<dbReference type="PANTHER" id="PTHR38326">
    <property type="entry name" value="CHROMOSOME 11 OPEN READING FRAME 97"/>
    <property type="match status" value="1"/>
</dbReference>
<dbReference type="PANTHER" id="PTHR38326:SF1">
    <property type="entry name" value="CHROMOSOME 11 OPEN READING FRAME 97"/>
    <property type="match status" value="1"/>
</dbReference>